<organism>
    <name type="scientific">Borreliella afzelii (strain PKo)</name>
    <name type="common">Borrelia afzelii</name>
    <dbReference type="NCBI Taxonomy" id="390236"/>
    <lineage>
        <taxon>Bacteria</taxon>
        <taxon>Pseudomonadati</taxon>
        <taxon>Spirochaetota</taxon>
        <taxon>Spirochaetia</taxon>
        <taxon>Spirochaetales</taxon>
        <taxon>Borreliaceae</taxon>
        <taxon>Borreliella</taxon>
    </lineage>
</organism>
<evidence type="ECO:0000255" key="1">
    <source>
        <dbReference type="HAMAP-Rule" id="MF_01810"/>
    </source>
</evidence>
<dbReference type="EMBL" id="CP000395">
    <property type="protein sequence ID" value="ABH01711.1"/>
    <property type="molecule type" value="Genomic_DNA"/>
</dbReference>
<dbReference type="EMBL" id="CP002933">
    <property type="protein sequence ID" value="AEL69665.1"/>
    <property type="molecule type" value="Genomic_DNA"/>
</dbReference>
<dbReference type="RefSeq" id="WP_004789474.1">
    <property type="nucleotide sequence ID" value="NZ_CP160066.1"/>
</dbReference>
<dbReference type="SMR" id="Q0SN67"/>
<dbReference type="STRING" id="29518.BLA32_02070"/>
<dbReference type="GeneID" id="76831979"/>
<dbReference type="KEGG" id="baf:BAPKO_0464"/>
<dbReference type="KEGG" id="bafz:BafPKo_0453"/>
<dbReference type="PATRIC" id="fig|390236.22.peg.437"/>
<dbReference type="eggNOG" id="COG0706">
    <property type="taxonomic scope" value="Bacteria"/>
</dbReference>
<dbReference type="HOGENOM" id="CLU_016535_2_0_12"/>
<dbReference type="OrthoDB" id="9780552at2"/>
<dbReference type="Proteomes" id="UP000005216">
    <property type="component" value="Chromosome"/>
</dbReference>
<dbReference type="GO" id="GO:0005886">
    <property type="term" value="C:plasma membrane"/>
    <property type="evidence" value="ECO:0007669"/>
    <property type="project" value="UniProtKB-SubCell"/>
</dbReference>
<dbReference type="GO" id="GO:0032977">
    <property type="term" value="F:membrane insertase activity"/>
    <property type="evidence" value="ECO:0007669"/>
    <property type="project" value="InterPro"/>
</dbReference>
<dbReference type="GO" id="GO:0051205">
    <property type="term" value="P:protein insertion into membrane"/>
    <property type="evidence" value="ECO:0007669"/>
    <property type="project" value="TreeGrafter"/>
</dbReference>
<dbReference type="GO" id="GO:0015031">
    <property type="term" value="P:protein transport"/>
    <property type="evidence" value="ECO:0007669"/>
    <property type="project" value="UniProtKB-KW"/>
</dbReference>
<dbReference type="CDD" id="cd20070">
    <property type="entry name" value="5TM_YidC_Alb3"/>
    <property type="match status" value="1"/>
</dbReference>
<dbReference type="Gene3D" id="2.70.98.90">
    <property type="match status" value="1"/>
</dbReference>
<dbReference type="HAMAP" id="MF_01810">
    <property type="entry name" value="YidC_type1"/>
    <property type="match status" value="1"/>
</dbReference>
<dbReference type="InterPro" id="IPR019998">
    <property type="entry name" value="Membr_insert_YidC"/>
</dbReference>
<dbReference type="InterPro" id="IPR001708">
    <property type="entry name" value="YidC/ALB3/OXA1/COX18"/>
</dbReference>
<dbReference type="InterPro" id="IPR028055">
    <property type="entry name" value="YidC/Oxa/ALB_C"/>
</dbReference>
<dbReference type="InterPro" id="IPR047196">
    <property type="entry name" value="YidC_ALB_C"/>
</dbReference>
<dbReference type="InterPro" id="IPR038221">
    <property type="entry name" value="YidC_periplasmic_sf"/>
</dbReference>
<dbReference type="NCBIfam" id="NF002358">
    <property type="entry name" value="PRK01318.2-5"/>
    <property type="match status" value="1"/>
</dbReference>
<dbReference type="NCBIfam" id="TIGR03592">
    <property type="entry name" value="yidC_oxa1_cterm"/>
    <property type="match status" value="1"/>
</dbReference>
<dbReference type="PANTHER" id="PTHR12428:SF65">
    <property type="entry name" value="CYTOCHROME C OXIDASE ASSEMBLY PROTEIN COX18, MITOCHONDRIAL"/>
    <property type="match status" value="1"/>
</dbReference>
<dbReference type="PANTHER" id="PTHR12428">
    <property type="entry name" value="OXA1"/>
    <property type="match status" value="1"/>
</dbReference>
<dbReference type="Pfam" id="PF02096">
    <property type="entry name" value="60KD_IMP"/>
    <property type="match status" value="1"/>
</dbReference>
<dbReference type="PRINTS" id="PR00701">
    <property type="entry name" value="60KDINNERMP"/>
</dbReference>
<name>YIDC_BORAP</name>
<proteinExistence type="inferred from homology"/>
<accession>Q0SN67</accession>
<accession>G0IS84</accession>
<comment type="function">
    <text evidence="1">Required for the insertion and/or proper folding and/or complex formation of integral membrane proteins into the membrane. Involved in integration of membrane proteins that insert both dependently and independently of the Sec translocase complex, as well as at least some lipoproteins. Aids folding of multispanning membrane proteins.</text>
</comment>
<comment type="subunit">
    <text evidence="1">Interacts with the Sec translocase complex via SecD. Specifically interacts with transmembrane segments of nascent integral membrane proteins during membrane integration.</text>
</comment>
<comment type="subcellular location">
    <subcellularLocation>
        <location evidence="1">Cell inner membrane</location>
        <topology evidence="1">Multi-pass membrane protein</topology>
    </subcellularLocation>
</comment>
<comment type="similarity">
    <text evidence="1">Belongs to the OXA1/ALB3/YidC family. Type 1 subfamily.</text>
</comment>
<gene>
    <name evidence="1" type="primary">yidC</name>
    <name type="ordered locus">BAPKO_0464</name>
    <name type="ordered locus">BafPKo_0453</name>
</gene>
<sequence length="544" mass="63978">MNQSKRILRTVYLSLFLIGLFMLINDIFSSWMLGSKSSDKELQFDLNKSFDDNKMLLSKSNNFNLIDKAQDIIVETGIYFATFSTFRGNLVSLKLKNHLNLEKDPTDLINVDYKNEPFFDVSFDYLVEDLFLYKKIDDFNHEFKAYFKNNGKTYEYVKKYTFSKKNEYLMRFEVIVNGLEDYNLLDIDSYKITFSSQIERLSDKAKLQYNNYLSQIIYYDNKLKYGKDDLRINNPKWIGSSTKYFEVLVSKENMEVEFKKEKGILKSFIVNNVINKKNISDKFFIYAGPKDNRYLDIFDKNSDNTFGLSDIAFGMSVEKSLWYLIQVPMQMVMQVFYDVIPNWGLSIIFLTIVVRILIFPLTFKGFRATAELSKLQPKMKELQVKFKHDPKKLNEEMGRLYKEEGVNPLGGCFPIILQLPIFFALYSLVNNLFLLRGANFIPGWIDDLSIGDSVYHFGYKLYFVSWTDIRILPFIMMFTQLGSTIVSSNIDLKNLGAQQKFLYFGMPIMFFFILYNMPSGLLIYWITTNIFTILQQYYIKMHLS</sequence>
<reference key="1">
    <citation type="journal article" date="2006" name="BMC Genomics">
        <title>Comparative genome analysis: selection pressure on the Borrelia vls cassettes is essential for infectivity.</title>
        <authorList>
            <person name="Gloeckner G."/>
            <person name="Schulte-Spechtel U."/>
            <person name="Schilhabel M."/>
            <person name="Felder M."/>
            <person name="Suehnel J."/>
            <person name="Wilske B."/>
            <person name="Platzer M."/>
        </authorList>
    </citation>
    <scope>NUCLEOTIDE SEQUENCE [LARGE SCALE GENOMIC DNA]</scope>
    <source>
        <strain>PKo</strain>
    </source>
</reference>
<reference key="2">
    <citation type="journal article" date="2011" name="J. Bacteriol.">
        <title>Whole-genome sequences of two Borrelia afzelii and two Borrelia garinii Lyme disease agent isolates.</title>
        <authorList>
            <person name="Casjens S.R."/>
            <person name="Mongodin E.F."/>
            <person name="Qiu W.G."/>
            <person name="Dunn J.J."/>
            <person name="Luft B.J."/>
            <person name="Fraser-Liggett C.M."/>
            <person name="Schutzer S.E."/>
        </authorList>
    </citation>
    <scope>NUCLEOTIDE SEQUENCE [LARGE SCALE GENOMIC DNA]</scope>
    <source>
        <strain>PKo</strain>
    </source>
</reference>
<protein>
    <recommendedName>
        <fullName evidence="1">Membrane protein insertase YidC</fullName>
    </recommendedName>
    <alternativeName>
        <fullName evidence="1">Foldase YidC</fullName>
    </alternativeName>
    <alternativeName>
        <fullName evidence="1">Membrane integrase YidC</fullName>
    </alternativeName>
    <alternativeName>
        <fullName evidence="1">Membrane protein YidC</fullName>
    </alternativeName>
</protein>
<keyword id="KW-0997">Cell inner membrane</keyword>
<keyword id="KW-1003">Cell membrane</keyword>
<keyword id="KW-0143">Chaperone</keyword>
<keyword id="KW-0472">Membrane</keyword>
<keyword id="KW-0653">Protein transport</keyword>
<keyword id="KW-0812">Transmembrane</keyword>
<keyword id="KW-1133">Transmembrane helix</keyword>
<keyword id="KW-0813">Transport</keyword>
<feature type="chain" id="PRO_1000070062" description="Membrane protein insertase YidC">
    <location>
        <begin position="1"/>
        <end position="544"/>
    </location>
</feature>
<feature type="transmembrane region" description="Helical" evidence="1">
    <location>
        <begin position="13"/>
        <end position="33"/>
    </location>
</feature>
<feature type="transmembrane region" description="Helical" evidence="1">
    <location>
        <begin position="321"/>
        <end position="341"/>
    </location>
</feature>
<feature type="transmembrane region" description="Helical" evidence="1">
    <location>
        <begin position="343"/>
        <end position="363"/>
    </location>
</feature>
<feature type="transmembrane region" description="Helical" evidence="1">
    <location>
        <begin position="409"/>
        <end position="429"/>
    </location>
</feature>
<feature type="transmembrane region" description="Helical" evidence="1">
    <location>
        <begin position="461"/>
        <end position="481"/>
    </location>
</feature>
<feature type="transmembrane region" description="Helical" evidence="1">
    <location>
        <begin position="506"/>
        <end position="526"/>
    </location>
</feature>